<dbReference type="EC" id="1.14.99.56" evidence="8"/>
<dbReference type="EMBL" id="BN001302">
    <property type="protein sequence ID" value="CBF73467.1"/>
    <property type="molecule type" value="Genomic_DNA"/>
</dbReference>
<dbReference type="SMR" id="C8V4I9"/>
<dbReference type="STRING" id="227321.C8V4I9"/>
<dbReference type="EnsemblFungi" id="CBF73467">
    <property type="protein sequence ID" value="CBF73467"/>
    <property type="gene ID" value="ANIA_07891"/>
</dbReference>
<dbReference type="VEuPathDB" id="FungiDB:AN7891"/>
<dbReference type="eggNOG" id="ENOG502RY3D">
    <property type="taxonomic scope" value="Eukaryota"/>
</dbReference>
<dbReference type="HOGENOM" id="CLU_031730_1_0_1"/>
<dbReference type="InParanoid" id="C8V4I9"/>
<dbReference type="OMA" id="FQRCVNG"/>
<dbReference type="OrthoDB" id="4849160at2759"/>
<dbReference type="Proteomes" id="UP000000560">
    <property type="component" value="Chromosome II"/>
</dbReference>
<dbReference type="GO" id="GO:0005576">
    <property type="term" value="C:extracellular region"/>
    <property type="evidence" value="ECO:0007669"/>
    <property type="project" value="UniProtKB-SubCell"/>
</dbReference>
<dbReference type="GO" id="GO:0046872">
    <property type="term" value="F:metal ion binding"/>
    <property type="evidence" value="ECO:0007669"/>
    <property type="project" value="UniProtKB-KW"/>
</dbReference>
<dbReference type="GO" id="GO:0004497">
    <property type="term" value="F:monooxygenase activity"/>
    <property type="evidence" value="ECO:0007669"/>
    <property type="project" value="UniProtKB-KW"/>
</dbReference>
<dbReference type="GO" id="GO:0030245">
    <property type="term" value="P:cellulose catabolic process"/>
    <property type="evidence" value="ECO:0007669"/>
    <property type="project" value="UniProtKB-KW"/>
</dbReference>
<dbReference type="CDD" id="cd21175">
    <property type="entry name" value="LPMO_AA9"/>
    <property type="match status" value="1"/>
</dbReference>
<dbReference type="Gene3D" id="2.70.50.70">
    <property type="match status" value="1"/>
</dbReference>
<dbReference type="InterPro" id="IPR049892">
    <property type="entry name" value="AA9"/>
</dbReference>
<dbReference type="InterPro" id="IPR005103">
    <property type="entry name" value="AA9_LPMO"/>
</dbReference>
<dbReference type="PANTHER" id="PTHR33353:SF34">
    <property type="entry name" value="ENDO-BETA-1,4-GLUCANASE D"/>
    <property type="match status" value="1"/>
</dbReference>
<dbReference type="PANTHER" id="PTHR33353">
    <property type="entry name" value="PUTATIVE (AFU_ORTHOLOGUE AFUA_1G12560)-RELATED"/>
    <property type="match status" value="1"/>
</dbReference>
<dbReference type="Pfam" id="PF03443">
    <property type="entry name" value="AA9"/>
    <property type="match status" value="1"/>
</dbReference>
<accession>C8V4I9</accession>
<sequence length="363" mass="37378">MSLFKFAAFVLGTAGSVAGHGYVTKIDVDGTTYGGYLVDTYSYEPDPPKLIAWSTTATDTGYVSPSAYGTSDIVCHRGAEPGALSAETLPGGSVTLYWNTWPTDHHGPVITYLANCNGDCASVDKSTLKFFKIDAGGLVDNSAVPGTWATDELIAADFSRTVTIPSDIASGNYVLRHEIIALHSAGNKDGAQNYPQCINLKITGSGTAAPTGTLGTELYKNTDAGIGVNIWNALSSYAIPGPALYTSGSDSNTATSGASPPSTNFSPTTTAAAATTTLSTVVTSAQSTSATVVAEQTSVSYSQTPWPSSTATEATSASSSAGGSNNGHTGTHDEAGHCPAHTGKKRSRLNRRRMASCSSRTQS</sequence>
<gene>
    <name evidence="6" type="primary">LPMO9I</name>
    <name type="ORF">AN7891</name>
    <name type="ORF">ANIA_07891</name>
</gene>
<reference key="1">
    <citation type="journal article" date="2005" name="Nature">
        <title>Sequencing of Aspergillus nidulans and comparative analysis with A. fumigatus and A. oryzae.</title>
        <authorList>
            <person name="Galagan J.E."/>
            <person name="Calvo S.E."/>
            <person name="Cuomo C."/>
            <person name="Ma L.-J."/>
            <person name="Wortman J.R."/>
            <person name="Batzoglou S."/>
            <person name="Lee S.-I."/>
            <person name="Bastuerkmen M."/>
            <person name="Spevak C.C."/>
            <person name="Clutterbuck J."/>
            <person name="Kapitonov V."/>
            <person name="Jurka J."/>
            <person name="Scazzocchio C."/>
            <person name="Farman M.L."/>
            <person name="Butler J."/>
            <person name="Purcell S."/>
            <person name="Harris S."/>
            <person name="Braus G.H."/>
            <person name="Draht O."/>
            <person name="Busch S."/>
            <person name="D'Enfert C."/>
            <person name="Bouchier C."/>
            <person name="Goldman G.H."/>
            <person name="Bell-Pedersen D."/>
            <person name="Griffiths-Jones S."/>
            <person name="Doonan J.H."/>
            <person name="Yu J."/>
            <person name="Vienken K."/>
            <person name="Pain A."/>
            <person name="Freitag M."/>
            <person name="Selker E.U."/>
            <person name="Archer D.B."/>
            <person name="Penalva M.A."/>
            <person name="Oakley B.R."/>
            <person name="Momany M."/>
            <person name="Tanaka T."/>
            <person name="Kumagai T."/>
            <person name="Asai K."/>
            <person name="Machida M."/>
            <person name="Nierman W.C."/>
            <person name="Denning D.W."/>
            <person name="Caddick M.X."/>
            <person name="Hynes M."/>
            <person name="Paoletti M."/>
            <person name="Fischer R."/>
            <person name="Miller B.L."/>
            <person name="Dyer P.S."/>
            <person name="Sachs M.S."/>
            <person name="Osmani S.A."/>
            <person name="Birren B.W."/>
        </authorList>
    </citation>
    <scope>NUCLEOTIDE SEQUENCE [LARGE SCALE GENOMIC DNA]</scope>
    <source>
        <strain>FGSC A4 / ATCC 38163 / CBS 112.46 / NRRL 194 / M139</strain>
    </source>
</reference>
<reference key="2">
    <citation type="journal article" date="2009" name="Fungal Genet. Biol.">
        <title>The 2008 update of the Aspergillus nidulans genome annotation: a community effort.</title>
        <authorList>
            <person name="Wortman J.R."/>
            <person name="Gilsenan J.M."/>
            <person name="Joardar V."/>
            <person name="Deegan J."/>
            <person name="Clutterbuck J."/>
            <person name="Andersen M.R."/>
            <person name="Archer D."/>
            <person name="Bencina M."/>
            <person name="Braus G."/>
            <person name="Coutinho P."/>
            <person name="von Dohren H."/>
            <person name="Doonan J."/>
            <person name="Driessen A.J."/>
            <person name="Durek P."/>
            <person name="Espeso E."/>
            <person name="Fekete E."/>
            <person name="Flipphi M."/>
            <person name="Estrada C.G."/>
            <person name="Geysens S."/>
            <person name="Goldman G."/>
            <person name="de Groot P.W."/>
            <person name="Hansen K."/>
            <person name="Harris S.D."/>
            <person name="Heinekamp T."/>
            <person name="Helmstaedt K."/>
            <person name="Henrissat B."/>
            <person name="Hofmann G."/>
            <person name="Homan T."/>
            <person name="Horio T."/>
            <person name="Horiuchi H."/>
            <person name="James S."/>
            <person name="Jones M."/>
            <person name="Karaffa L."/>
            <person name="Karanyi Z."/>
            <person name="Kato M."/>
            <person name="Keller N."/>
            <person name="Kelly D.E."/>
            <person name="Kiel J.A."/>
            <person name="Kim J.M."/>
            <person name="van der Klei I.J."/>
            <person name="Klis F.M."/>
            <person name="Kovalchuk A."/>
            <person name="Krasevec N."/>
            <person name="Kubicek C.P."/>
            <person name="Liu B."/>
            <person name="Maccabe A."/>
            <person name="Meyer V."/>
            <person name="Mirabito P."/>
            <person name="Miskei M."/>
            <person name="Mos M."/>
            <person name="Mullins J."/>
            <person name="Nelson D.R."/>
            <person name="Nielsen J."/>
            <person name="Oakley B.R."/>
            <person name="Osmani S.A."/>
            <person name="Pakula T."/>
            <person name="Paszewski A."/>
            <person name="Paulsen I."/>
            <person name="Pilsyk S."/>
            <person name="Pocsi I."/>
            <person name="Punt P.J."/>
            <person name="Ram A.F."/>
            <person name="Ren Q."/>
            <person name="Robellet X."/>
            <person name="Robson G."/>
            <person name="Seiboth B."/>
            <person name="van Solingen P."/>
            <person name="Specht T."/>
            <person name="Sun J."/>
            <person name="Taheri-Talesh N."/>
            <person name="Takeshita N."/>
            <person name="Ussery D."/>
            <person name="vanKuyk P.A."/>
            <person name="Visser H."/>
            <person name="van de Vondervoort P.J."/>
            <person name="de Vries R.P."/>
            <person name="Walton J."/>
            <person name="Xiang X."/>
            <person name="Xiong Y."/>
            <person name="Zeng A.P."/>
            <person name="Brandt B.W."/>
            <person name="Cornell M.J."/>
            <person name="van den Hondel C.A."/>
            <person name="Visser J."/>
            <person name="Oliver S.G."/>
            <person name="Turner G."/>
        </authorList>
    </citation>
    <scope>GENOME REANNOTATION</scope>
    <source>
        <strain>FGSC A4 / ATCC 38163 / CBS 112.46 / NRRL 194 / M139</strain>
    </source>
</reference>
<reference key="3">
    <citation type="journal article" date="2016" name="Appl. Microbiol. Biotechnol.">
        <title>A family of AA9 lytic polysaccharide monooxygenases in Aspergillus nidulans is differentially regulated by multiple substrates and at least one is active on cellulose and xyloglucan.</title>
        <authorList>
            <person name="Jagadeeswaran G."/>
            <person name="Gainey L."/>
            <person name="Prade R."/>
            <person name="Mort A.J."/>
        </authorList>
    </citation>
    <scope>FUNCTION</scope>
    <scope>INDUCTION</scope>
    <scope>BIOTECHNOLOGY</scope>
</reference>
<reference key="4">
    <citation type="journal article" date="2016" name="Biotechnol. Biofuels">
        <title>Lytic polysaccharide monooxygenases and other oxidative enzymes are abundantly secreted by Aspergillus nidulans grown on different starches.</title>
        <authorList>
            <person name="Nekiunaite L."/>
            <person name="Arntzen M.O."/>
            <person name="Svensson B."/>
            <person name="Vaaje-Kolstad G."/>
            <person name="Abou Hachem M."/>
        </authorList>
    </citation>
    <scope>IDENTIFICATION</scope>
</reference>
<organism>
    <name type="scientific">Emericella nidulans (strain FGSC A4 / ATCC 38163 / CBS 112.46 / NRRL 194 / M139)</name>
    <name type="common">Aspergillus nidulans</name>
    <dbReference type="NCBI Taxonomy" id="227321"/>
    <lineage>
        <taxon>Eukaryota</taxon>
        <taxon>Fungi</taxon>
        <taxon>Dikarya</taxon>
        <taxon>Ascomycota</taxon>
        <taxon>Pezizomycotina</taxon>
        <taxon>Eurotiomycetes</taxon>
        <taxon>Eurotiomycetidae</taxon>
        <taxon>Eurotiales</taxon>
        <taxon>Aspergillaceae</taxon>
        <taxon>Aspergillus</taxon>
        <taxon>Aspergillus subgen. Nidulantes</taxon>
    </lineage>
</organism>
<evidence type="ECO:0000250" key="1">
    <source>
        <dbReference type="UniProtKB" id="Q1K8B6"/>
    </source>
</evidence>
<evidence type="ECO:0000250" key="2">
    <source>
        <dbReference type="UniProtKB" id="Q4WP32"/>
    </source>
</evidence>
<evidence type="ECO:0000255" key="3"/>
<evidence type="ECO:0000256" key="4">
    <source>
        <dbReference type="SAM" id="MobiDB-lite"/>
    </source>
</evidence>
<evidence type="ECO:0000269" key="5">
    <source>
    </source>
</evidence>
<evidence type="ECO:0000303" key="6">
    <source>
    </source>
</evidence>
<evidence type="ECO:0000305" key="7"/>
<evidence type="ECO:0000305" key="8">
    <source>
    </source>
</evidence>
<comment type="function">
    <text evidence="8">Lytic polysaccharide monooxygenase (LPMO) that depolymerizes crystalline and amorphous polysaccharides via the oxidation of scissile alpha- or beta-(1-4)-glycosidic bonds, yielding C1 or C4 oxidation products (Probable). Catalysis by LPMOs requires the reduction of the active-site copper from Cu(II) to Cu(I) by a reducing agent and H(2)O(2) or O(2) as a cosubstrate (Probable).</text>
</comment>
<comment type="catalytic activity">
    <reaction evidence="8">
        <text>[(1-&gt;4)-beta-D-glucosyl]n+m + reduced acceptor + O2 = 4-dehydro-beta-D-glucosyl-[(1-&gt;4)-beta-D-glucosyl]n-1 + [(1-&gt;4)-beta-D-glucosyl]m + acceptor + H2O.</text>
        <dbReference type="EC" id="1.14.99.56"/>
    </reaction>
</comment>
<comment type="cofactor">
    <cofactor evidence="1">
        <name>Cu(2+)</name>
        <dbReference type="ChEBI" id="CHEBI:29036"/>
    </cofactor>
    <text evidence="1">Binds 1 copper ion per subunit.</text>
</comment>
<comment type="subcellular location">
    <subcellularLocation>
        <location evidence="8">Secreted</location>
    </subcellularLocation>
</comment>
<comment type="induction">
    <text evidence="5">The promoter contains the consensus sequence for xlnR binding sites (5'-GGCTAA/G-3') (PubMed:27075737). The degenerate binding motif 5'-SYGGRG-3' that binds to creA involved in carbon catabolite repression is also present in the promoter (PubMed:27075737).</text>
</comment>
<comment type="biotechnology">
    <text evidence="8">Lignocellulose is the most abundant polymeric composite on Earth and is a recalcitrant but promising renewable substrate for industrial biotechnology applications. Together with cellobiose dehydrogenases (CDHs) an enzymatic system capable of oxidative cellulose cleavage is formed, which increases the efficiency of cellulases and put LPMOs at focus of biofuel research.</text>
</comment>
<comment type="similarity">
    <text evidence="7">Belongs to the polysaccharide monooxygenase AA9 family.</text>
</comment>
<keyword id="KW-0119">Carbohydrate metabolism</keyword>
<keyword id="KW-0136">Cellulose degradation</keyword>
<keyword id="KW-0186">Copper</keyword>
<keyword id="KW-1015">Disulfide bond</keyword>
<keyword id="KW-0479">Metal-binding</keyword>
<keyword id="KW-0503">Monooxygenase</keyword>
<keyword id="KW-0560">Oxidoreductase</keyword>
<keyword id="KW-0624">Polysaccharide degradation</keyword>
<keyword id="KW-1185">Reference proteome</keyword>
<keyword id="KW-0964">Secreted</keyword>
<keyword id="KW-0732">Signal</keyword>
<feature type="signal peptide" evidence="3">
    <location>
        <begin position="1"/>
        <end position="19"/>
    </location>
</feature>
<feature type="chain" id="PRO_5010335842" description="AA9 family lytic polysaccharide monooxygenase I">
    <location>
        <begin position="20"/>
        <end position="363"/>
    </location>
</feature>
<feature type="region of interest" description="Disordered" evidence="4">
    <location>
        <begin position="248"/>
        <end position="270"/>
    </location>
</feature>
<feature type="region of interest" description="Disordered" evidence="4">
    <location>
        <begin position="298"/>
        <end position="363"/>
    </location>
</feature>
<feature type="compositionally biased region" description="Polar residues" evidence="4">
    <location>
        <begin position="248"/>
        <end position="257"/>
    </location>
</feature>
<feature type="compositionally biased region" description="Low complexity" evidence="4">
    <location>
        <begin position="258"/>
        <end position="270"/>
    </location>
</feature>
<feature type="compositionally biased region" description="Polar residues" evidence="4">
    <location>
        <begin position="298"/>
        <end position="307"/>
    </location>
</feature>
<feature type="compositionally biased region" description="Low complexity" evidence="4">
    <location>
        <begin position="308"/>
        <end position="329"/>
    </location>
</feature>
<feature type="compositionally biased region" description="Basic residues" evidence="4">
    <location>
        <begin position="342"/>
        <end position="354"/>
    </location>
</feature>
<feature type="binding site" evidence="1">
    <location>
        <position position="20"/>
    </location>
    <ligand>
        <name>Cu(2+)</name>
        <dbReference type="ChEBI" id="CHEBI:29036"/>
        <note>catalytic</note>
    </ligand>
</feature>
<feature type="binding site" evidence="1">
    <location>
        <position position="105"/>
    </location>
    <ligand>
        <name>Cu(2+)</name>
        <dbReference type="ChEBI" id="CHEBI:29036"/>
        <note>catalytic</note>
    </ligand>
</feature>
<feature type="binding site" evidence="1">
    <location>
        <position position="183"/>
    </location>
    <ligand>
        <name>O2</name>
        <dbReference type="ChEBI" id="CHEBI:15379"/>
    </ligand>
</feature>
<feature type="binding site" evidence="1">
    <location>
        <position position="192"/>
    </location>
    <ligand>
        <name>O2</name>
        <dbReference type="ChEBI" id="CHEBI:15379"/>
    </ligand>
</feature>
<feature type="binding site" evidence="1">
    <location>
        <position position="194"/>
    </location>
    <ligand>
        <name>Cu(2+)</name>
        <dbReference type="ChEBI" id="CHEBI:29036"/>
        <note>catalytic</note>
    </ligand>
</feature>
<feature type="disulfide bond" evidence="2">
    <location>
        <begin position="75"/>
        <end position="197"/>
    </location>
</feature>
<feature type="disulfide bond" evidence="2">
    <location>
        <begin position="116"/>
        <end position="120"/>
    </location>
</feature>
<protein>
    <recommendedName>
        <fullName evidence="6">AA9 family lytic polysaccharide monooxygenase I</fullName>
        <shortName evidence="6">LPMO9I</shortName>
        <ecNumber evidence="8">1.14.99.56</ecNumber>
    </recommendedName>
    <alternativeName>
        <fullName evidence="7">Cellulase LPMO9I</fullName>
    </alternativeName>
    <alternativeName>
        <fullName evidence="7">Endo-beta-1,4-glucanase LPMO9I</fullName>
        <shortName evidence="7">Endoglucanase LPMO9I</shortName>
    </alternativeName>
    <alternativeName>
        <fullName evidence="7">Glycosyl hydrolase 61 family protein LPMO9I</fullName>
    </alternativeName>
</protein>
<name>LP9I_EMENI</name>
<proteinExistence type="evidence at transcript level"/>